<gene>
    <name type="primary">UL106</name>
</gene>
<organismHost>
    <name type="scientific">Homo sapiens</name>
    <name type="common">Human</name>
    <dbReference type="NCBI Taxonomy" id="9606"/>
</organismHost>
<feature type="chain" id="PRO_0000115345" description="Uncharacterized protein UL106">
    <location>
        <begin position="1"/>
        <end position="125"/>
    </location>
</feature>
<dbReference type="EMBL" id="X17403">
    <property type="protein sequence ID" value="CAA35342.1"/>
    <property type="molecule type" value="Genomic_DNA"/>
</dbReference>
<dbReference type="PIR" id="S09871">
    <property type="entry name" value="S09871"/>
</dbReference>
<dbReference type="Proteomes" id="UP000008991">
    <property type="component" value="Segment"/>
</dbReference>
<reference key="1">
    <citation type="journal article" date="1990" name="Curr. Top. Microbiol. Immunol.">
        <title>Analysis of the protein-coding content of the sequence of human cytomegalovirus strain AD169.</title>
        <authorList>
            <person name="Chee M.S."/>
            <person name="Bankier A.T."/>
            <person name="Beck S."/>
            <person name="Bohni R."/>
            <person name="Brown C.M."/>
            <person name="Cerny R."/>
            <person name="Horsnell T."/>
            <person name="Hutchison C.A. III"/>
            <person name="Kouzarides T."/>
            <person name="Martignetti J.A."/>
            <person name="Preddie E."/>
            <person name="Satchwell S.C."/>
            <person name="Tomlinson P."/>
            <person name="Weston K.M."/>
            <person name="Barrell B.G."/>
        </authorList>
    </citation>
    <scope>NUCLEOTIDE SEQUENCE [LARGE SCALE GENOMIC DNA]</scope>
</reference>
<proteinExistence type="predicted"/>
<accession>P16737</accession>
<protein>
    <recommendedName>
        <fullName>Uncharacterized protein UL106</fullName>
    </recommendedName>
</protein>
<name>UL106_HCMVA</name>
<sequence>MMTDRTERRRRLTHAACTPSANNQRTTRLPPHPGFFSWSNPACDDGLFLYRTTVSRGVDTQRRRRSHPGFFSCRYHPSTVSLARRHRGPGKRISLRTEISKDADPISTVTETRWFLLNFQCIEPP</sequence>
<organism>
    <name type="scientific">Human cytomegalovirus (strain AD169)</name>
    <name type="common">HHV-5</name>
    <name type="synonym">Human herpesvirus 5</name>
    <dbReference type="NCBI Taxonomy" id="10360"/>
    <lineage>
        <taxon>Viruses</taxon>
        <taxon>Duplodnaviria</taxon>
        <taxon>Heunggongvirae</taxon>
        <taxon>Peploviricota</taxon>
        <taxon>Herviviricetes</taxon>
        <taxon>Herpesvirales</taxon>
        <taxon>Orthoherpesviridae</taxon>
        <taxon>Betaherpesvirinae</taxon>
        <taxon>Cytomegalovirus</taxon>
        <taxon>Cytomegalovirus humanbeta5</taxon>
        <taxon>Human cytomegalovirus</taxon>
    </lineage>
</organism>